<proteinExistence type="inferred from homology"/>
<accession>Q6TC38</accession>
<dbReference type="EMBL" id="AY424657">
    <property type="protein sequence ID" value="AAR10368.1"/>
    <property type="molecule type" value="Genomic_DNA"/>
</dbReference>
<dbReference type="SMR" id="Q6TC38"/>
<dbReference type="GO" id="GO:0005737">
    <property type="term" value="C:cytoplasm"/>
    <property type="evidence" value="ECO:0007669"/>
    <property type="project" value="UniProtKB-SubCell"/>
</dbReference>
<dbReference type="GO" id="GO:0016607">
    <property type="term" value="C:nuclear speck"/>
    <property type="evidence" value="ECO:0007669"/>
    <property type="project" value="UniProtKB-SubCell"/>
</dbReference>
<dbReference type="GO" id="GO:0005634">
    <property type="term" value="C:nucleus"/>
    <property type="evidence" value="ECO:0000250"/>
    <property type="project" value="UniProtKB"/>
</dbReference>
<dbReference type="GO" id="GO:0005516">
    <property type="term" value="F:calmodulin binding"/>
    <property type="evidence" value="ECO:0007669"/>
    <property type="project" value="UniProtKB-KW"/>
</dbReference>
<dbReference type="GO" id="GO:0001228">
    <property type="term" value="F:DNA-binding transcription activator activity, RNA polymerase II-specific"/>
    <property type="evidence" value="ECO:0007669"/>
    <property type="project" value="TreeGrafter"/>
</dbReference>
<dbReference type="GO" id="GO:0000978">
    <property type="term" value="F:RNA polymerase II cis-regulatory region sequence-specific DNA binding"/>
    <property type="evidence" value="ECO:0007669"/>
    <property type="project" value="TreeGrafter"/>
</dbReference>
<dbReference type="GO" id="GO:0030154">
    <property type="term" value="P:cell differentiation"/>
    <property type="evidence" value="ECO:0007669"/>
    <property type="project" value="UniProtKB-KW"/>
</dbReference>
<dbReference type="GO" id="GO:0030238">
    <property type="term" value="P:male sex determination"/>
    <property type="evidence" value="ECO:0007669"/>
    <property type="project" value="InterPro"/>
</dbReference>
<dbReference type="GO" id="GO:0007548">
    <property type="term" value="P:sex differentiation"/>
    <property type="evidence" value="ECO:0007669"/>
    <property type="project" value="UniProtKB-KW"/>
</dbReference>
<dbReference type="CDD" id="cd22034">
    <property type="entry name" value="HMG-box_SoxA_SRY"/>
    <property type="match status" value="1"/>
</dbReference>
<dbReference type="FunFam" id="1.10.30.10:FF:000002">
    <property type="entry name" value="transcription factor Sox-2"/>
    <property type="match status" value="1"/>
</dbReference>
<dbReference type="Gene3D" id="1.10.30.10">
    <property type="entry name" value="High mobility group box domain"/>
    <property type="match status" value="1"/>
</dbReference>
<dbReference type="InterPro" id="IPR009071">
    <property type="entry name" value="HMG_box_dom"/>
</dbReference>
<dbReference type="InterPro" id="IPR036910">
    <property type="entry name" value="HMG_box_dom_sf"/>
</dbReference>
<dbReference type="InterPro" id="IPR017253">
    <property type="entry name" value="SRY"/>
</dbReference>
<dbReference type="InterPro" id="IPR050140">
    <property type="entry name" value="SRY-related_HMG-box_TF-like"/>
</dbReference>
<dbReference type="PANTHER" id="PTHR10270:SF161">
    <property type="entry name" value="SEX-DETERMINING REGION Y PROTEIN"/>
    <property type="match status" value="1"/>
</dbReference>
<dbReference type="PANTHER" id="PTHR10270">
    <property type="entry name" value="SOX TRANSCRIPTION FACTOR"/>
    <property type="match status" value="1"/>
</dbReference>
<dbReference type="Pfam" id="PF00505">
    <property type="entry name" value="HMG_box"/>
    <property type="match status" value="1"/>
</dbReference>
<dbReference type="PIRSF" id="PIRSF037653">
    <property type="entry name" value="SRY"/>
    <property type="match status" value="1"/>
</dbReference>
<dbReference type="SMART" id="SM00398">
    <property type="entry name" value="HMG"/>
    <property type="match status" value="1"/>
</dbReference>
<dbReference type="SUPFAM" id="SSF47095">
    <property type="entry name" value="HMG-box"/>
    <property type="match status" value="1"/>
</dbReference>
<dbReference type="PROSITE" id="PS50118">
    <property type="entry name" value="HMG_BOX_2"/>
    <property type="match status" value="1"/>
</dbReference>
<feature type="chain" id="PRO_0000048683" description="Sex-determining region Y protein">
    <location>
        <begin position="1"/>
        <end position="218"/>
    </location>
</feature>
<feature type="DNA-binding region" description="HMG box" evidence="3">
    <location>
        <begin position="54"/>
        <end position="122"/>
    </location>
</feature>
<feature type="region of interest" description="Disordered" evidence="4">
    <location>
        <begin position="33"/>
        <end position="53"/>
    </location>
</feature>
<comment type="function">
    <text evidence="1 2">Transcriptional regulator that controls a genetic switch in male development. It is necessary and sufficient for initiating male sex determination by directing the development of supporting cell precursors (pre-Sertoli cells) as Sertoli rather than granulosa cells. Involved in different aspects of gene regulation including promoter activation or repression. Binds to the DNA consensus sequence 5'-[AT]AACAA[AT]-3'. SRY HMG box recognizes DNA by partial intercalation in the minor groove and promotes DNA bending. Also involved in pre-mRNA splicing (By similarity). In male adult brain involved in the maintenance of motor functions of dopaminergic neurons (By similarity).</text>
</comment>
<comment type="subunit">
    <text evidence="2">Interacts with CALM, EP300, HDAC3, KPNB1, ZNF208 isoform KRAB-O, PARP1, SLC9A3R2 and WT1. The interaction with EP300 modulates its DNA-binding activity. The interaction with KPNB1 is sensitive to dissociation by Ran in the GTP-bound form. Interaction with PARP1 impaired its DNA-binding activity.</text>
</comment>
<comment type="subcellular location">
    <subcellularLocation>
        <location evidence="2">Nucleus speckle</location>
    </subcellularLocation>
    <subcellularLocation>
        <location evidence="2">Cytoplasm</location>
    </subcellularLocation>
    <subcellularLocation>
        <location evidence="2">Nucleus</location>
    </subcellularLocation>
</comment>
<comment type="similarity">
    <text evidence="5">Belongs to the SRY family.</text>
</comment>
<comment type="online information" name="Protein Spotlight">
    <link uri="https://www.proteinspotlight.org/back_issues/080"/>
    <text>The tenuous nature of sex - Issue 80 of March 2007</text>
</comment>
<evidence type="ECO:0000250" key="1">
    <source>
        <dbReference type="UniProtKB" id="P36394"/>
    </source>
</evidence>
<evidence type="ECO:0000250" key="2">
    <source>
        <dbReference type="UniProtKB" id="Q05066"/>
    </source>
</evidence>
<evidence type="ECO:0000255" key="3">
    <source>
        <dbReference type="PROSITE-ProRule" id="PRU00267"/>
    </source>
</evidence>
<evidence type="ECO:0000256" key="4">
    <source>
        <dbReference type="SAM" id="MobiDB-lite"/>
    </source>
</evidence>
<evidence type="ECO:0000305" key="5"/>
<reference key="1">
    <citation type="submission" date="2003-09" db="EMBL/GenBank/DDBJ databases">
        <title>A phylogeny of the pinnipeds from mitochondrial and single copy nuclear gene sequences.</title>
        <authorList>
            <person name="Kinnear M.W."/>
            <person name="Walker G."/>
            <person name="Amos W."/>
        </authorList>
    </citation>
    <scope>NUCLEOTIDE SEQUENCE [GENOMIC DNA]</scope>
</reference>
<keyword id="KW-0010">Activator</keyword>
<keyword id="KW-0112">Calmodulin-binding</keyword>
<keyword id="KW-0963">Cytoplasm</keyword>
<keyword id="KW-0221">Differentiation</keyword>
<keyword id="KW-0238">DNA-binding</keyword>
<keyword id="KW-0539">Nucleus</keyword>
<keyword id="KW-0726">Sexual differentiation</keyword>
<keyword id="KW-0804">Transcription</keyword>
<keyword id="KW-0805">Transcription regulation</keyword>
<sequence>MFGVLNSSDHRAAVQQRNIPAFGRTSFELWTDSPTSNHRCETGGNGRDSGQNRVRRPMNAFMVWSRDHRRRVALENPQMQNSEISKQLGYQWKMLTEAEKWPFFEEAQRLQAMHREKYPDYKYRPRRKALPQKSDKLLPAASSSTLCRQVLVDEKWYPFTYRDSCSRAAHPRMEDHLSSSQPVNIANSLLQQEHHYCSTSLRDSPETLAMHLSADPPF</sequence>
<gene>
    <name type="primary">SRY</name>
    <name type="synonym">TDF</name>
</gene>
<protein>
    <recommendedName>
        <fullName>Sex-determining region Y protein</fullName>
    </recommendedName>
    <alternativeName>
        <fullName>Testis-determining factor</fullName>
    </alternativeName>
</protein>
<organism>
    <name type="scientific">Mirounga leonina</name>
    <name type="common">Southern elephant seal</name>
    <name type="synonym">Phoca leonina</name>
    <dbReference type="NCBI Taxonomy" id="9715"/>
    <lineage>
        <taxon>Eukaryota</taxon>
        <taxon>Metazoa</taxon>
        <taxon>Chordata</taxon>
        <taxon>Craniata</taxon>
        <taxon>Vertebrata</taxon>
        <taxon>Euteleostomi</taxon>
        <taxon>Mammalia</taxon>
        <taxon>Eutheria</taxon>
        <taxon>Laurasiatheria</taxon>
        <taxon>Carnivora</taxon>
        <taxon>Caniformia</taxon>
        <taxon>Pinnipedia</taxon>
        <taxon>Phocidae</taxon>
        <taxon>Monachinae</taxon>
        <taxon>Miroungini</taxon>
        <taxon>Mirounga</taxon>
    </lineage>
</organism>
<name>SRY_MIRLE</name>